<proteinExistence type="inferred from homology"/>
<accession>P55099</accession>
<accession>Q9QXS9</accession>
<gene>
    <name type="primary">Tac3</name>
    <name type="synonym">Nknb</name>
    <name type="synonym">Tac2</name>
</gene>
<keyword id="KW-0027">Amidation</keyword>
<keyword id="KW-0165">Cleavage on pair of basic residues</keyword>
<keyword id="KW-0527">Neuropeptide</keyword>
<keyword id="KW-1185">Reference proteome</keyword>
<keyword id="KW-0964">Secreted</keyword>
<keyword id="KW-0732">Signal</keyword>
<protein>
    <recommendedName>
        <fullName>Tachykinin-3</fullName>
    </recommendedName>
    <alternativeName>
        <fullName>Neurokinin B-like protein Zneurok1</fullName>
    </alternativeName>
    <alternativeName>
        <fullName>Preprotachykinin-B</fullName>
        <shortName>PPT-B</shortName>
    </alternativeName>
    <component>
        <recommendedName>
            <fullName>Neurokinin-B</fullName>
            <shortName>NKB</shortName>
        </recommendedName>
        <alternativeName>
            <fullName>Neuromedin-K</fullName>
        </alternativeName>
    </component>
</protein>
<evidence type="ECO:0000250" key="1"/>
<evidence type="ECO:0000255" key="2"/>
<evidence type="ECO:0000256" key="3">
    <source>
        <dbReference type="SAM" id="MobiDB-lite"/>
    </source>
</evidence>
<evidence type="ECO:0000305" key="4"/>
<feature type="signal peptide" evidence="2">
    <location>
        <begin position="1"/>
        <end position="20"/>
    </location>
</feature>
<feature type="propeptide" id="PRO_0000033568">
    <location>
        <begin position="21"/>
        <end position="79"/>
    </location>
</feature>
<feature type="peptide" id="PRO_0000033569" description="Neurokinin-B">
    <location>
        <begin position="82"/>
        <end position="91"/>
    </location>
</feature>
<feature type="propeptide" id="PRO_0000033570">
    <location>
        <begin position="95"/>
        <end position="116"/>
    </location>
</feature>
<feature type="region of interest" description="Disordered" evidence="3">
    <location>
        <begin position="93"/>
        <end position="116"/>
    </location>
</feature>
<feature type="modified residue" description="Methionine amide" evidence="1">
    <location>
        <position position="91"/>
    </location>
</feature>
<feature type="sequence conflict" description="In Ref. 1; BAA03316." evidence="4" ref="1">
    <original>G</original>
    <variation>E</variation>
    <location>
        <position position="28"/>
    </location>
</feature>
<comment type="function">
    <text evidence="1">Tachykinins are active peptides which excite neurons, evoke behavioral responses, are potent vasodilators and secretagogues, and contract (directly or indirectly) many smooth muscles. Is a critical central regulator of gonadal function (By similarity).</text>
</comment>
<comment type="subcellular location">
    <subcellularLocation>
        <location>Secreted</location>
    </subcellularLocation>
</comment>
<comment type="similarity">
    <text evidence="4">Belongs to the tachykinin family.</text>
</comment>
<dbReference type="EMBL" id="D14423">
    <property type="protein sequence ID" value="BAA03316.1"/>
    <property type="molecule type" value="mRNA"/>
</dbReference>
<dbReference type="EMBL" id="AF186116">
    <property type="protein sequence ID" value="AAF01434.1"/>
    <property type="molecule type" value="mRNA"/>
</dbReference>
<dbReference type="EMBL" id="BC051476">
    <property type="protein sequence ID" value="AAH51476.1"/>
    <property type="molecule type" value="mRNA"/>
</dbReference>
<dbReference type="CCDS" id="CCDS24248.1"/>
<dbReference type="PIR" id="I65342">
    <property type="entry name" value="I65342"/>
</dbReference>
<dbReference type="RefSeq" id="NP_001186900.1">
    <property type="nucleotide sequence ID" value="NM_001199971.1"/>
</dbReference>
<dbReference type="RefSeq" id="NP_033338.2">
    <property type="nucleotide sequence ID" value="NM_009312.2"/>
</dbReference>
<dbReference type="SMR" id="P55099"/>
<dbReference type="BioGRID" id="203951">
    <property type="interactions" value="1"/>
</dbReference>
<dbReference type="FunCoup" id="P55099">
    <property type="interactions" value="673"/>
</dbReference>
<dbReference type="STRING" id="10090.ENSMUSP00000136622"/>
<dbReference type="PhosphoSitePlus" id="P55099"/>
<dbReference type="PaxDb" id="10090-ENSMUSP00000136622"/>
<dbReference type="ProteomicsDB" id="259396"/>
<dbReference type="Antibodypedia" id="28422">
    <property type="antibodies" value="277 antibodies from 28 providers"/>
</dbReference>
<dbReference type="DNASU" id="21334"/>
<dbReference type="Ensembl" id="ENSMUST00000026466.5">
    <property type="protein sequence ID" value="ENSMUSP00000026466.4"/>
    <property type="gene ID" value="ENSMUSG00000025400.12"/>
</dbReference>
<dbReference type="Ensembl" id="ENSMUST00000179960.8">
    <property type="protein sequence ID" value="ENSMUSP00000136622.2"/>
    <property type="gene ID" value="ENSMUSG00000025400.12"/>
</dbReference>
<dbReference type="GeneID" id="21334"/>
<dbReference type="KEGG" id="mmu:21334"/>
<dbReference type="UCSC" id="uc007hkj.2">
    <property type="organism name" value="mouse"/>
</dbReference>
<dbReference type="AGR" id="MGI:98476"/>
<dbReference type="CTD" id="21334"/>
<dbReference type="MGI" id="MGI:98476">
    <property type="gene designation" value="Tac2"/>
</dbReference>
<dbReference type="VEuPathDB" id="HostDB:ENSMUSG00000025400"/>
<dbReference type="eggNOG" id="ENOG502S4B9">
    <property type="taxonomic scope" value="Eukaryota"/>
</dbReference>
<dbReference type="GeneTree" id="ENSGT00390000000335"/>
<dbReference type="HOGENOM" id="CLU_138627_0_0_1"/>
<dbReference type="InParanoid" id="P55099"/>
<dbReference type="OMA" id="MDFQKRD"/>
<dbReference type="OrthoDB" id="9397481at2759"/>
<dbReference type="PhylomeDB" id="P55099"/>
<dbReference type="TreeFam" id="TF337038"/>
<dbReference type="Reactome" id="R-MMU-380095">
    <property type="pathway name" value="Tachykinin receptors bind tachykinins"/>
</dbReference>
<dbReference type="Reactome" id="R-MMU-416476">
    <property type="pathway name" value="G alpha (q) signalling events"/>
</dbReference>
<dbReference type="BioGRID-ORCS" id="21334">
    <property type="hits" value="2 hits in 76 CRISPR screens"/>
</dbReference>
<dbReference type="ChiTaRS" id="Tac2">
    <property type="organism name" value="mouse"/>
</dbReference>
<dbReference type="PRO" id="PR:P55099"/>
<dbReference type="Proteomes" id="UP000000589">
    <property type="component" value="Chromosome 10"/>
</dbReference>
<dbReference type="RNAct" id="P55099">
    <property type="molecule type" value="protein"/>
</dbReference>
<dbReference type="Bgee" id="ENSMUSG00000025400">
    <property type="expression patterns" value="Expressed in gastrula and 70 other cell types or tissues"/>
</dbReference>
<dbReference type="GO" id="GO:0005576">
    <property type="term" value="C:extracellular region"/>
    <property type="evidence" value="ECO:0007669"/>
    <property type="project" value="UniProtKB-SubCell"/>
</dbReference>
<dbReference type="GO" id="GO:0007218">
    <property type="term" value="P:neuropeptide signaling pathway"/>
    <property type="evidence" value="ECO:0007669"/>
    <property type="project" value="UniProtKB-KW"/>
</dbReference>
<dbReference type="GO" id="GO:0007217">
    <property type="term" value="P:tachykinin receptor signaling pathway"/>
    <property type="evidence" value="ECO:0007669"/>
    <property type="project" value="InterPro"/>
</dbReference>
<dbReference type="InterPro" id="IPR003635">
    <property type="entry name" value="Neurokinin-B/TAC3"/>
</dbReference>
<dbReference type="InterPro" id="IPR013055">
    <property type="entry name" value="Tachy_Neuro_lke_CS"/>
</dbReference>
<dbReference type="PANTHER" id="PTHR15536">
    <property type="entry name" value="TACHYKININ-3"/>
    <property type="match status" value="1"/>
</dbReference>
<dbReference type="PANTHER" id="PTHR15536:SF1">
    <property type="entry name" value="TACHYKININ-3"/>
    <property type="match status" value="1"/>
</dbReference>
<dbReference type="Pfam" id="PF03823">
    <property type="entry name" value="Neurokinin_B"/>
    <property type="match status" value="1"/>
</dbReference>
<dbReference type="PIRSF" id="PIRSF001843">
    <property type="entry name" value="Neurokinin"/>
    <property type="match status" value="1"/>
</dbReference>
<dbReference type="PRINTS" id="PR01828">
    <property type="entry name" value="NEUROKININB"/>
</dbReference>
<dbReference type="PROSITE" id="PS00267">
    <property type="entry name" value="TACHYKININ"/>
    <property type="match status" value="1"/>
</dbReference>
<name>TKNK_MOUSE</name>
<sequence>MRSAMLFAAVLALSLAWTFGAVCEEPQGQGGRLSKDSDLYQLPPSLLRRLYDSRPVSLEGLLKVLSKASVGPKETSLPQKRDMHDFFVGLMGKRNSQPDTPTDVVEENTPSFGILK</sequence>
<reference key="1">
    <citation type="journal article" date="1993" name="Biomed. Res.">
        <title>Cloning and sequence analysis of mouse cDNAs encoding preprotachykinin A and B.</title>
        <authorList>
            <person name="Kako K."/>
            <person name="Munekata E."/>
            <person name="Hosaka M."/>
            <person name="Murakami K."/>
            <person name="Nakayama K."/>
        </authorList>
    </citation>
    <scope>NUCLEOTIDE SEQUENCE [MRNA]</scope>
    <source>
        <strain>ICR</strain>
        <tissue>Brain</tissue>
    </source>
</reference>
<reference key="2">
    <citation type="submission" date="1999-09" db="EMBL/GenBank/DDBJ databases">
        <title>Mus musculus homolog of neurokinin B.</title>
        <authorList>
            <person name="Sheppard P."/>
            <person name="Jelinek L."/>
            <person name="Whitmore T."/>
            <person name="Blumberg H."/>
            <person name="Lehner J."/>
            <person name="O'Hara P."/>
        </authorList>
    </citation>
    <scope>NUCLEOTIDE SEQUENCE [MRNA]</scope>
</reference>
<reference key="3">
    <citation type="journal article" date="2004" name="Genome Res.">
        <title>The status, quality, and expansion of the NIH full-length cDNA project: the Mammalian Gene Collection (MGC).</title>
        <authorList>
            <consortium name="The MGC Project Team"/>
        </authorList>
    </citation>
    <scope>NUCLEOTIDE SEQUENCE [LARGE SCALE MRNA]</scope>
    <source>
        <tissue>Uterus</tissue>
    </source>
</reference>
<organism>
    <name type="scientific">Mus musculus</name>
    <name type="common">Mouse</name>
    <dbReference type="NCBI Taxonomy" id="10090"/>
    <lineage>
        <taxon>Eukaryota</taxon>
        <taxon>Metazoa</taxon>
        <taxon>Chordata</taxon>
        <taxon>Craniata</taxon>
        <taxon>Vertebrata</taxon>
        <taxon>Euteleostomi</taxon>
        <taxon>Mammalia</taxon>
        <taxon>Eutheria</taxon>
        <taxon>Euarchontoglires</taxon>
        <taxon>Glires</taxon>
        <taxon>Rodentia</taxon>
        <taxon>Myomorpha</taxon>
        <taxon>Muroidea</taxon>
        <taxon>Muridae</taxon>
        <taxon>Murinae</taxon>
        <taxon>Mus</taxon>
        <taxon>Mus</taxon>
    </lineage>
</organism>